<name>HIS3_LISIN</name>
<keyword id="KW-0028">Amino-acid biosynthesis</keyword>
<keyword id="KW-0963">Cytoplasm</keyword>
<keyword id="KW-0368">Histidine biosynthesis</keyword>
<keyword id="KW-0378">Hydrolase</keyword>
<keyword id="KW-0460">Magnesium</keyword>
<keyword id="KW-0479">Metal-binding</keyword>
<keyword id="KW-0862">Zinc</keyword>
<gene>
    <name evidence="1" type="primary">hisI</name>
    <name type="ordered locus">lin0571</name>
</gene>
<reference key="1">
    <citation type="journal article" date="2001" name="Science">
        <title>Comparative genomics of Listeria species.</title>
        <authorList>
            <person name="Glaser P."/>
            <person name="Frangeul L."/>
            <person name="Buchrieser C."/>
            <person name="Rusniok C."/>
            <person name="Amend A."/>
            <person name="Baquero F."/>
            <person name="Berche P."/>
            <person name="Bloecker H."/>
            <person name="Brandt P."/>
            <person name="Chakraborty T."/>
            <person name="Charbit A."/>
            <person name="Chetouani F."/>
            <person name="Couve E."/>
            <person name="de Daruvar A."/>
            <person name="Dehoux P."/>
            <person name="Domann E."/>
            <person name="Dominguez-Bernal G."/>
            <person name="Duchaud E."/>
            <person name="Durant L."/>
            <person name="Dussurget O."/>
            <person name="Entian K.-D."/>
            <person name="Fsihi H."/>
            <person name="Garcia-del Portillo F."/>
            <person name="Garrido P."/>
            <person name="Gautier L."/>
            <person name="Goebel W."/>
            <person name="Gomez-Lopez N."/>
            <person name="Hain T."/>
            <person name="Hauf J."/>
            <person name="Jackson D."/>
            <person name="Jones L.-M."/>
            <person name="Kaerst U."/>
            <person name="Kreft J."/>
            <person name="Kuhn M."/>
            <person name="Kunst F."/>
            <person name="Kurapkat G."/>
            <person name="Madueno E."/>
            <person name="Maitournam A."/>
            <person name="Mata Vicente J."/>
            <person name="Ng E."/>
            <person name="Nedjari H."/>
            <person name="Nordsiek G."/>
            <person name="Novella S."/>
            <person name="de Pablos B."/>
            <person name="Perez-Diaz J.-C."/>
            <person name="Purcell R."/>
            <person name="Remmel B."/>
            <person name="Rose M."/>
            <person name="Schlueter T."/>
            <person name="Simoes N."/>
            <person name="Tierrez A."/>
            <person name="Vazquez-Boland J.-A."/>
            <person name="Voss H."/>
            <person name="Wehland J."/>
            <person name="Cossart P."/>
        </authorList>
    </citation>
    <scope>NUCLEOTIDE SEQUENCE [LARGE SCALE GENOMIC DNA]</scope>
    <source>
        <strain>ATCC BAA-680 / CLIP 11262</strain>
    </source>
</reference>
<protein>
    <recommendedName>
        <fullName evidence="1">Phosphoribosyl-AMP cyclohydrolase</fullName>
        <shortName evidence="1">PRA-CH</shortName>
        <ecNumber evidence="1">3.5.4.19</ecNumber>
    </recommendedName>
</protein>
<organism>
    <name type="scientific">Listeria innocua serovar 6a (strain ATCC BAA-680 / CLIP 11262)</name>
    <dbReference type="NCBI Taxonomy" id="272626"/>
    <lineage>
        <taxon>Bacteria</taxon>
        <taxon>Bacillati</taxon>
        <taxon>Bacillota</taxon>
        <taxon>Bacilli</taxon>
        <taxon>Bacillales</taxon>
        <taxon>Listeriaceae</taxon>
        <taxon>Listeria</taxon>
    </lineage>
</organism>
<comment type="function">
    <text evidence="1">Catalyzes the hydrolysis of the adenine ring of phosphoribosyl-AMP.</text>
</comment>
<comment type="catalytic activity">
    <reaction evidence="1">
        <text>1-(5-phospho-beta-D-ribosyl)-5'-AMP + H2O = 1-(5-phospho-beta-D-ribosyl)-5-[(5-phospho-beta-D-ribosylamino)methylideneamino]imidazole-4-carboxamide</text>
        <dbReference type="Rhea" id="RHEA:20049"/>
        <dbReference type="ChEBI" id="CHEBI:15377"/>
        <dbReference type="ChEBI" id="CHEBI:58435"/>
        <dbReference type="ChEBI" id="CHEBI:59457"/>
        <dbReference type="EC" id="3.5.4.19"/>
    </reaction>
</comment>
<comment type="cofactor">
    <cofactor evidence="1">
        <name>Mg(2+)</name>
        <dbReference type="ChEBI" id="CHEBI:18420"/>
    </cofactor>
    <text evidence="1">Binds 1 Mg(2+) ion per subunit.</text>
</comment>
<comment type="cofactor">
    <cofactor evidence="1">
        <name>Zn(2+)</name>
        <dbReference type="ChEBI" id="CHEBI:29105"/>
    </cofactor>
    <text evidence="1">Binds 1 zinc ion per subunit.</text>
</comment>
<comment type="pathway">
    <text evidence="1">Amino-acid biosynthesis; L-histidine biosynthesis; L-histidine from 5-phospho-alpha-D-ribose 1-diphosphate: step 3/9.</text>
</comment>
<comment type="subunit">
    <text evidence="1">Homodimer.</text>
</comment>
<comment type="subcellular location">
    <subcellularLocation>
        <location evidence="1">Cytoplasm</location>
    </subcellularLocation>
</comment>
<comment type="similarity">
    <text evidence="1">Belongs to the PRA-CH family.</text>
</comment>
<proteinExistence type="inferred from homology"/>
<feature type="chain" id="PRO_0000136481" description="Phosphoribosyl-AMP cyclohydrolase">
    <location>
        <begin position="1"/>
        <end position="105"/>
    </location>
</feature>
<feature type="binding site" evidence="1">
    <location>
        <position position="72"/>
    </location>
    <ligand>
        <name>Mg(2+)</name>
        <dbReference type="ChEBI" id="CHEBI:18420"/>
    </ligand>
</feature>
<feature type="binding site" evidence="1">
    <location>
        <position position="73"/>
    </location>
    <ligand>
        <name>Zn(2+)</name>
        <dbReference type="ChEBI" id="CHEBI:29105"/>
        <note>ligand shared between dimeric partners</note>
    </ligand>
</feature>
<feature type="binding site" evidence="1">
    <location>
        <position position="74"/>
    </location>
    <ligand>
        <name>Mg(2+)</name>
        <dbReference type="ChEBI" id="CHEBI:18420"/>
    </ligand>
</feature>
<feature type="binding site" evidence="1">
    <location>
        <position position="76"/>
    </location>
    <ligand>
        <name>Mg(2+)</name>
        <dbReference type="ChEBI" id="CHEBI:18420"/>
    </ligand>
</feature>
<feature type="binding site" evidence="1">
    <location>
        <position position="89"/>
    </location>
    <ligand>
        <name>Zn(2+)</name>
        <dbReference type="ChEBI" id="CHEBI:29105"/>
        <note>ligand shared between dimeric partners</note>
    </ligand>
</feature>
<feature type="binding site" evidence="1">
    <location>
        <position position="96"/>
    </location>
    <ligand>
        <name>Zn(2+)</name>
        <dbReference type="ChEBI" id="CHEBI:29105"/>
        <note>ligand shared between dimeric partners</note>
    </ligand>
</feature>
<sequence>MNTVDFSKGLVPTIILDDQNGEVLMLAYMNQESYQKTLETGYTWFFSRSRNELWNKGETSGNTQKVKQIWTDCDNDTLLIRVIQTGPACHTGKKSCFFNLIKEDF</sequence>
<evidence type="ECO:0000255" key="1">
    <source>
        <dbReference type="HAMAP-Rule" id="MF_01021"/>
    </source>
</evidence>
<dbReference type="EC" id="3.5.4.19" evidence="1"/>
<dbReference type="EMBL" id="AL596165">
    <property type="protein sequence ID" value="CAC95803.1"/>
    <property type="molecule type" value="Genomic_DNA"/>
</dbReference>
<dbReference type="PIR" id="AC1504">
    <property type="entry name" value="AC1504"/>
</dbReference>
<dbReference type="RefSeq" id="WP_010990492.1">
    <property type="nucleotide sequence ID" value="NC_003212.1"/>
</dbReference>
<dbReference type="SMR" id="Q92E89"/>
<dbReference type="STRING" id="272626.gene:17564897"/>
<dbReference type="KEGG" id="lin:lin0571"/>
<dbReference type="eggNOG" id="COG0139">
    <property type="taxonomic scope" value="Bacteria"/>
</dbReference>
<dbReference type="HOGENOM" id="CLU_048577_5_3_9"/>
<dbReference type="OrthoDB" id="9795769at2"/>
<dbReference type="UniPathway" id="UPA00031">
    <property type="reaction ID" value="UER00008"/>
</dbReference>
<dbReference type="Proteomes" id="UP000002513">
    <property type="component" value="Chromosome"/>
</dbReference>
<dbReference type="GO" id="GO:0005737">
    <property type="term" value="C:cytoplasm"/>
    <property type="evidence" value="ECO:0007669"/>
    <property type="project" value="UniProtKB-SubCell"/>
</dbReference>
<dbReference type="GO" id="GO:0000287">
    <property type="term" value="F:magnesium ion binding"/>
    <property type="evidence" value="ECO:0007669"/>
    <property type="project" value="UniProtKB-UniRule"/>
</dbReference>
<dbReference type="GO" id="GO:0004635">
    <property type="term" value="F:phosphoribosyl-AMP cyclohydrolase activity"/>
    <property type="evidence" value="ECO:0007669"/>
    <property type="project" value="UniProtKB-UniRule"/>
</dbReference>
<dbReference type="GO" id="GO:0008270">
    <property type="term" value="F:zinc ion binding"/>
    <property type="evidence" value="ECO:0007669"/>
    <property type="project" value="UniProtKB-UniRule"/>
</dbReference>
<dbReference type="GO" id="GO:0000105">
    <property type="term" value="P:L-histidine biosynthetic process"/>
    <property type="evidence" value="ECO:0007669"/>
    <property type="project" value="UniProtKB-UniRule"/>
</dbReference>
<dbReference type="FunFam" id="3.10.20.810:FF:000001">
    <property type="entry name" value="Histidine biosynthesis bifunctional protein HisIE"/>
    <property type="match status" value="1"/>
</dbReference>
<dbReference type="Gene3D" id="3.10.20.810">
    <property type="entry name" value="Phosphoribosyl-AMP cyclohydrolase"/>
    <property type="match status" value="1"/>
</dbReference>
<dbReference type="HAMAP" id="MF_01021">
    <property type="entry name" value="HisI"/>
    <property type="match status" value="1"/>
</dbReference>
<dbReference type="InterPro" id="IPR026660">
    <property type="entry name" value="PRA-CH"/>
</dbReference>
<dbReference type="InterPro" id="IPR002496">
    <property type="entry name" value="PRib_AMP_CycHydrolase_dom"/>
</dbReference>
<dbReference type="InterPro" id="IPR038019">
    <property type="entry name" value="PRib_AMP_CycHydrolase_sf"/>
</dbReference>
<dbReference type="NCBIfam" id="NF000768">
    <property type="entry name" value="PRK00051.1"/>
    <property type="match status" value="1"/>
</dbReference>
<dbReference type="PANTHER" id="PTHR42945">
    <property type="entry name" value="HISTIDINE BIOSYNTHESIS BIFUNCTIONAL PROTEIN"/>
    <property type="match status" value="1"/>
</dbReference>
<dbReference type="PANTHER" id="PTHR42945:SF1">
    <property type="entry name" value="HISTIDINE BIOSYNTHESIS BIFUNCTIONAL PROTEIN HIS7"/>
    <property type="match status" value="1"/>
</dbReference>
<dbReference type="Pfam" id="PF01502">
    <property type="entry name" value="PRA-CH"/>
    <property type="match status" value="1"/>
</dbReference>
<dbReference type="SUPFAM" id="SSF141734">
    <property type="entry name" value="HisI-like"/>
    <property type="match status" value="1"/>
</dbReference>
<accession>Q92E89</accession>